<accession>Q8PEW7</accession>
<organism>
    <name type="scientific">Xanthomonas axonopodis pv. citri (strain 306)</name>
    <dbReference type="NCBI Taxonomy" id="190486"/>
    <lineage>
        <taxon>Bacteria</taxon>
        <taxon>Pseudomonadati</taxon>
        <taxon>Pseudomonadota</taxon>
        <taxon>Gammaproteobacteria</taxon>
        <taxon>Lysobacterales</taxon>
        <taxon>Lysobacteraceae</taxon>
        <taxon>Xanthomonas</taxon>
    </lineage>
</organism>
<reference key="1">
    <citation type="journal article" date="2002" name="Nature">
        <title>Comparison of the genomes of two Xanthomonas pathogens with differing host specificities.</title>
        <authorList>
            <person name="da Silva A.C.R."/>
            <person name="Ferro J.A."/>
            <person name="Reinach F.C."/>
            <person name="Farah C.S."/>
            <person name="Furlan L.R."/>
            <person name="Quaggio R.B."/>
            <person name="Monteiro-Vitorello C.B."/>
            <person name="Van Sluys M.A."/>
            <person name="Almeida N.F. Jr."/>
            <person name="Alves L.M.C."/>
            <person name="do Amaral A.M."/>
            <person name="Bertolini M.C."/>
            <person name="Camargo L.E.A."/>
            <person name="Camarotte G."/>
            <person name="Cannavan F."/>
            <person name="Cardozo J."/>
            <person name="Chambergo F."/>
            <person name="Ciapina L.P."/>
            <person name="Cicarelli R.M.B."/>
            <person name="Coutinho L.L."/>
            <person name="Cursino-Santos J.R."/>
            <person name="El-Dorry H."/>
            <person name="Faria J.B."/>
            <person name="Ferreira A.J.S."/>
            <person name="Ferreira R.C.C."/>
            <person name="Ferro M.I.T."/>
            <person name="Formighieri E.F."/>
            <person name="Franco M.C."/>
            <person name="Greggio C.C."/>
            <person name="Gruber A."/>
            <person name="Katsuyama A.M."/>
            <person name="Kishi L.T."/>
            <person name="Leite R.P."/>
            <person name="Lemos E.G.M."/>
            <person name="Lemos M.V.F."/>
            <person name="Locali E.C."/>
            <person name="Machado M.A."/>
            <person name="Madeira A.M.B.N."/>
            <person name="Martinez-Rossi N.M."/>
            <person name="Martins E.C."/>
            <person name="Meidanis J."/>
            <person name="Menck C.F.M."/>
            <person name="Miyaki C.Y."/>
            <person name="Moon D.H."/>
            <person name="Moreira L.M."/>
            <person name="Novo M.T.M."/>
            <person name="Okura V.K."/>
            <person name="Oliveira M.C."/>
            <person name="Oliveira V.R."/>
            <person name="Pereira H.A."/>
            <person name="Rossi A."/>
            <person name="Sena J.A.D."/>
            <person name="Silva C."/>
            <person name="de Souza R.F."/>
            <person name="Spinola L.A.F."/>
            <person name="Takita M.A."/>
            <person name="Tamura R.E."/>
            <person name="Teixeira E.C."/>
            <person name="Tezza R.I.D."/>
            <person name="Trindade dos Santos M."/>
            <person name="Truffi D."/>
            <person name="Tsai S.M."/>
            <person name="White F.F."/>
            <person name="Setubal J.C."/>
            <person name="Kitajima J.P."/>
        </authorList>
    </citation>
    <scope>NUCLEOTIDE SEQUENCE [LARGE SCALE GENOMIC DNA]</scope>
    <source>
        <strain>306</strain>
    </source>
</reference>
<name>RDGC_XANAC</name>
<proteinExistence type="inferred from homology"/>
<feature type="chain" id="PRO_0000211756" description="Recombination-associated protein RdgC">
    <location>
        <begin position="1"/>
        <end position="301"/>
    </location>
</feature>
<comment type="function">
    <text evidence="1">May be involved in recombination.</text>
</comment>
<comment type="subcellular location">
    <subcellularLocation>
        <location evidence="1">Cytoplasm</location>
        <location evidence="1">Nucleoid</location>
    </subcellularLocation>
</comment>
<comment type="similarity">
    <text evidence="1">Belongs to the RdgC family.</text>
</comment>
<keyword id="KW-0963">Cytoplasm</keyword>
<keyword id="KW-0233">DNA recombination</keyword>
<gene>
    <name evidence="1" type="primary">rdgC</name>
    <name type="ordered locus">XAC4223</name>
</gene>
<protein>
    <recommendedName>
        <fullName evidence="1">Recombination-associated protein RdgC</fullName>
    </recommendedName>
</protein>
<dbReference type="EMBL" id="AE008923">
    <property type="protein sequence ID" value="AAM39058.1"/>
    <property type="molecule type" value="Genomic_DNA"/>
</dbReference>
<dbReference type="RefSeq" id="WP_003484983.1">
    <property type="nucleotide sequence ID" value="NC_003919.1"/>
</dbReference>
<dbReference type="SMR" id="Q8PEW7"/>
<dbReference type="KEGG" id="xac:XAC4223"/>
<dbReference type="eggNOG" id="COG2974">
    <property type="taxonomic scope" value="Bacteria"/>
</dbReference>
<dbReference type="HOGENOM" id="CLU_052038_1_1_6"/>
<dbReference type="Proteomes" id="UP000000576">
    <property type="component" value="Chromosome"/>
</dbReference>
<dbReference type="GO" id="GO:0043590">
    <property type="term" value="C:bacterial nucleoid"/>
    <property type="evidence" value="ECO:0007669"/>
    <property type="project" value="TreeGrafter"/>
</dbReference>
<dbReference type="GO" id="GO:0005737">
    <property type="term" value="C:cytoplasm"/>
    <property type="evidence" value="ECO:0007669"/>
    <property type="project" value="UniProtKB-UniRule"/>
</dbReference>
<dbReference type="GO" id="GO:0003690">
    <property type="term" value="F:double-stranded DNA binding"/>
    <property type="evidence" value="ECO:0007669"/>
    <property type="project" value="TreeGrafter"/>
</dbReference>
<dbReference type="GO" id="GO:0006310">
    <property type="term" value="P:DNA recombination"/>
    <property type="evidence" value="ECO:0007669"/>
    <property type="project" value="UniProtKB-UniRule"/>
</dbReference>
<dbReference type="GO" id="GO:0000018">
    <property type="term" value="P:regulation of DNA recombination"/>
    <property type="evidence" value="ECO:0007669"/>
    <property type="project" value="TreeGrafter"/>
</dbReference>
<dbReference type="HAMAP" id="MF_00194">
    <property type="entry name" value="RdgC"/>
    <property type="match status" value="1"/>
</dbReference>
<dbReference type="InterPro" id="IPR007476">
    <property type="entry name" value="RdgC"/>
</dbReference>
<dbReference type="NCBIfam" id="NF001464">
    <property type="entry name" value="PRK00321.1-5"/>
    <property type="match status" value="1"/>
</dbReference>
<dbReference type="NCBIfam" id="NF001465">
    <property type="entry name" value="PRK00321.1-6"/>
    <property type="match status" value="1"/>
</dbReference>
<dbReference type="PANTHER" id="PTHR38103">
    <property type="entry name" value="RECOMBINATION-ASSOCIATED PROTEIN RDGC"/>
    <property type="match status" value="1"/>
</dbReference>
<dbReference type="PANTHER" id="PTHR38103:SF1">
    <property type="entry name" value="RECOMBINATION-ASSOCIATED PROTEIN RDGC"/>
    <property type="match status" value="1"/>
</dbReference>
<dbReference type="Pfam" id="PF04381">
    <property type="entry name" value="RdgC"/>
    <property type="match status" value="1"/>
</dbReference>
<sequence length="301" mass="33398">MFFRNLTLFRFPTTLDFSQIDTLLPPVQLKPVGPLEMSSRGFISPFGRDEQEVLSHRLEDFLWLTVGGEDKILPGAVVNDLLERKVAEIEEKEGRRPGGKARKRLKDDLIHELLPRAFVKSSRTDAILDLQHGYIAVNSSSRKSGENVMSEIRGALGSFPALPLNAEVAPRAILTGWIAGEPLPEGLSLGEECEMKDPIEGGAVVKCQHQELRGDEIDKHLEAGKQVTKLALVLDDNLSFVLGDDLVIRKLKFLDGALDQLEHSEDDGARAELDARFALMSAEIRRLFLLLETALKLSKAE</sequence>
<evidence type="ECO:0000255" key="1">
    <source>
        <dbReference type="HAMAP-Rule" id="MF_00194"/>
    </source>
</evidence>